<sequence length="519" mass="56684">MADDGSASNRRDPIKSSVGNVAGQRRRKQAVTVAKERRELLVRAKRLCRVGTNGDVEDALVENEMMVDEEQPILEAQASKSVEELKSAVQYQGKGAMQKRVTALRELRRLLSKSEFPPVEAALRAGAIPLLVQCLSFGSPDEQLLESAWCLTNIAAGKPEETKALLPALPLLIAHLGEKSSAPVAEQCAWAIGNVAGEGEDLRNVLLSQGALPPLARMIFPDKGSTVRTAAWALSNLIKGPESKAAAQLVKIDGILDAILRHLKKTDEETATEIAWIIVYLSALSDIATSMLLKGGILQLLIDRLATSSSLQLLIPVLRSLGNFVAVDPKAVLTILIREQNTEESIIGVLAKCLRSEHRVLKKEAAWVLSNIAAGSIEHKRMIHSTEVMPLLLRILSTSPFDIRKEVAYVLGNLCVESAEGDRKPRIIQEHLVSIVSGGCLRGFIELVRSPDIEAARLGLQFIELVLRGMPNGEGPKLVEGEDGIDAMERFQFHENEELRVMANSLVDKYFGEDYGIDE</sequence>
<feature type="chain" id="PRO_0000431575" description="Importin subunit alpha-9">
    <location>
        <begin position="1"/>
        <end position="519"/>
    </location>
</feature>
<feature type="repeat" description="ARM 1" evidence="2">
    <location>
        <begin position="116"/>
        <end position="156"/>
    </location>
</feature>
<feature type="repeat" description="ARM 2" evidence="2">
    <location>
        <begin position="158"/>
        <end position="197"/>
    </location>
</feature>
<feature type="repeat" description="ARM 3" evidence="2">
    <location>
        <begin position="200"/>
        <end position="239"/>
    </location>
</feature>
<feature type="repeat" description="ARM 4" evidence="2">
    <location>
        <begin position="244"/>
        <end position="283"/>
    </location>
</feature>
<feature type="repeat" description="ARM 5" evidence="2">
    <location>
        <begin position="286"/>
        <end position="326"/>
    </location>
</feature>
<feature type="repeat" description="ARM 6" evidence="2">
    <location>
        <begin position="335"/>
        <end position="374"/>
    </location>
</feature>
<feature type="repeat" description="ARM 7" evidence="2">
    <location>
        <begin position="377"/>
        <end position="416"/>
    </location>
</feature>
<feature type="repeat" description="ARM 8" evidence="2">
    <location>
        <begin position="429"/>
        <end position="468"/>
    </location>
</feature>
<feature type="region of interest" description="Disordered" evidence="3">
    <location>
        <begin position="1"/>
        <end position="29"/>
    </location>
</feature>
<gene>
    <name evidence="5" type="primary">IMPA9</name>
    <name evidence="7" type="ordered locus">At5g03070</name>
    <name evidence="8" type="ORF">F15A17.100</name>
</gene>
<keyword id="KW-0539">Nucleus</keyword>
<keyword id="KW-0653">Protein transport</keyword>
<keyword id="KW-1185">Reference proteome</keyword>
<keyword id="KW-0677">Repeat</keyword>
<keyword id="KW-0813">Transport</keyword>
<organism>
    <name type="scientific">Arabidopsis thaliana</name>
    <name type="common">Mouse-ear cress</name>
    <dbReference type="NCBI Taxonomy" id="3702"/>
    <lineage>
        <taxon>Eukaryota</taxon>
        <taxon>Viridiplantae</taxon>
        <taxon>Streptophyta</taxon>
        <taxon>Embryophyta</taxon>
        <taxon>Tracheophyta</taxon>
        <taxon>Spermatophyta</taxon>
        <taxon>Magnoliopsida</taxon>
        <taxon>eudicotyledons</taxon>
        <taxon>Gunneridae</taxon>
        <taxon>Pentapetalae</taxon>
        <taxon>rosids</taxon>
        <taxon>malvids</taxon>
        <taxon>Brassicales</taxon>
        <taxon>Brassicaceae</taxon>
        <taxon>Camelineae</taxon>
        <taxon>Arabidopsis</taxon>
    </lineage>
</organism>
<protein>
    <recommendedName>
        <fullName evidence="6">Importin subunit alpha-9</fullName>
        <shortName evidence="5">IMPa-9</shortName>
    </recommendedName>
</protein>
<name>IMPA9_ARATH</name>
<dbReference type="EMBL" id="AL163002">
    <property type="protein sequence ID" value="CAB86074.1"/>
    <property type="status" value="ALT_SEQ"/>
    <property type="molecule type" value="Genomic_DNA"/>
</dbReference>
<dbReference type="EMBL" id="CP002688">
    <property type="protein sequence ID" value="AED90553.1"/>
    <property type="molecule type" value="Genomic_DNA"/>
</dbReference>
<dbReference type="PIR" id="T48328">
    <property type="entry name" value="T48328"/>
</dbReference>
<dbReference type="RefSeq" id="NP_195927.2">
    <property type="nucleotide sequence ID" value="NM_120385.4"/>
</dbReference>
<dbReference type="SMR" id="F4KF65"/>
<dbReference type="FunCoup" id="F4KF65">
    <property type="interactions" value="719"/>
</dbReference>
<dbReference type="IntAct" id="F4KF65">
    <property type="interactions" value="1"/>
</dbReference>
<dbReference type="STRING" id="3702.F4KF65"/>
<dbReference type="GlyGen" id="F4KF65">
    <property type="glycosylation" value="1 site"/>
</dbReference>
<dbReference type="PaxDb" id="3702-AT5G03070.1"/>
<dbReference type="ProteomicsDB" id="247015"/>
<dbReference type="EnsemblPlants" id="AT5G03070.1">
    <property type="protein sequence ID" value="AT5G03070.1"/>
    <property type="gene ID" value="AT5G03070"/>
</dbReference>
<dbReference type="GeneID" id="831675"/>
<dbReference type="Gramene" id="AT5G03070.1">
    <property type="protein sequence ID" value="AT5G03070.1"/>
    <property type="gene ID" value="AT5G03070"/>
</dbReference>
<dbReference type="KEGG" id="ath:AT5G03070"/>
<dbReference type="Araport" id="AT5G03070"/>
<dbReference type="TAIR" id="AT5G03070">
    <property type="gene designation" value="IMPA-9"/>
</dbReference>
<dbReference type="eggNOG" id="KOG0166">
    <property type="taxonomic scope" value="Eukaryota"/>
</dbReference>
<dbReference type="HOGENOM" id="CLU_516194_0_0_1"/>
<dbReference type="InParanoid" id="F4KF65"/>
<dbReference type="OMA" id="QMRNMAN"/>
<dbReference type="PRO" id="PR:F4KF65"/>
<dbReference type="Proteomes" id="UP000006548">
    <property type="component" value="Chromosome 5"/>
</dbReference>
<dbReference type="ExpressionAtlas" id="F4KF65">
    <property type="expression patterns" value="baseline and differential"/>
</dbReference>
<dbReference type="GO" id="GO:0005737">
    <property type="term" value="C:cytoplasm"/>
    <property type="evidence" value="ECO:0007669"/>
    <property type="project" value="InterPro"/>
</dbReference>
<dbReference type="GO" id="GO:0005635">
    <property type="term" value="C:nuclear envelope"/>
    <property type="evidence" value="ECO:0007669"/>
    <property type="project" value="UniProtKB-SubCell"/>
</dbReference>
<dbReference type="GO" id="GO:0061608">
    <property type="term" value="F:nuclear import signal receptor activity"/>
    <property type="evidence" value="ECO:0007669"/>
    <property type="project" value="InterPro"/>
</dbReference>
<dbReference type="GO" id="GO:0006606">
    <property type="term" value="P:protein import into nucleus"/>
    <property type="evidence" value="ECO:0007669"/>
    <property type="project" value="InterPro"/>
</dbReference>
<dbReference type="FunFam" id="1.25.10.10:FF:000222">
    <property type="entry name" value="Importin subunit alpha"/>
    <property type="match status" value="1"/>
</dbReference>
<dbReference type="Gene3D" id="1.25.10.10">
    <property type="entry name" value="Leucine-rich Repeat Variant"/>
    <property type="match status" value="1"/>
</dbReference>
<dbReference type="InterPro" id="IPR011989">
    <property type="entry name" value="ARM-like"/>
</dbReference>
<dbReference type="InterPro" id="IPR016024">
    <property type="entry name" value="ARM-type_fold"/>
</dbReference>
<dbReference type="InterPro" id="IPR000225">
    <property type="entry name" value="Armadillo"/>
</dbReference>
<dbReference type="InterPro" id="IPR024931">
    <property type="entry name" value="Importin_alpha"/>
</dbReference>
<dbReference type="PANTHER" id="PTHR23316">
    <property type="entry name" value="IMPORTIN ALPHA"/>
    <property type="match status" value="1"/>
</dbReference>
<dbReference type="Pfam" id="PF00514">
    <property type="entry name" value="Arm"/>
    <property type="match status" value="3"/>
</dbReference>
<dbReference type="PIRSF" id="PIRSF005673">
    <property type="entry name" value="Importin_alpha"/>
    <property type="match status" value="1"/>
</dbReference>
<dbReference type="SMART" id="SM00185">
    <property type="entry name" value="ARM"/>
    <property type="match status" value="7"/>
</dbReference>
<dbReference type="SUPFAM" id="SSF48371">
    <property type="entry name" value="ARM repeat"/>
    <property type="match status" value="1"/>
</dbReference>
<comment type="function">
    <text evidence="1 4">Binds to conventional NLS motifs and mediates nuclear protein import across the nuclear envelope (By similarity). Acts as a cellular receptor for the nuclear import of the virD2 protein of Agrobacterium, but is not essential for Agrobacterium-mediated root transformation (PubMed:18836040).</text>
</comment>
<comment type="subunit">
    <text evidence="1">Forms a complex with importin subunit beta-1.</text>
</comment>
<comment type="subcellular location">
    <subcellularLocation>
        <location evidence="1">Nucleus envelope</location>
    </subcellularLocation>
</comment>
<comment type="similarity">
    <text evidence="6">Belongs to the importin alpha family.</text>
</comment>
<comment type="sequence caution" evidence="6">
    <conflict type="erroneous gene model prediction">
        <sequence resource="EMBL-CDS" id="CAB86074"/>
    </conflict>
</comment>
<evidence type="ECO:0000250" key="1">
    <source>
        <dbReference type="UniProtKB" id="Q96321"/>
    </source>
</evidence>
<evidence type="ECO:0000255" key="2"/>
<evidence type="ECO:0000256" key="3">
    <source>
        <dbReference type="SAM" id="MobiDB-lite"/>
    </source>
</evidence>
<evidence type="ECO:0000269" key="4">
    <source>
    </source>
</evidence>
<evidence type="ECO:0000303" key="5">
    <source>
    </source>
</evidence>
<evidence type="ECO:0000305" key="6"/>
<evidence type="ECO:0000312" key="7">
    <source>
        <dbReference type="Araport" id="AT5G03070"/>
    </source>
</evidence>
<evidence type="ECO:0000312" key="8">
    <source>
        <dbReference type="EMBL" id="CAB86074.1"/>
    </source>
</evidence>
<proteinExistence type="inferred from homology"/>
<reference key="1">
    <citation type="journal article" date="2000" name="Nature">
        <title>Sequence and analysis of chromosome 5 of the plant Arabidopsis thaliana.</title>
        <authorList>
            <person name="Tabata S."/>
            <person name="Kaneko T."/>
            <person name="Nakamura Y."/>
            <person name="Kotani H."/>
            <person name="Kato T."/>
            <person name="Asamizu E."/>
            <person name="Miyajima N."/>
            <person name="Sasamoto S."/>
            <person name="Kimura T."/>
            <person name="Hosouchi T."/>
            <person name="Kawashima K."/>
            <person name="Kohara M."/>
            <person name="Matsumoto M."/>
            <person name="Matsuno A."/>
            <person name="Muraki A."/>
            <person name="Nakayama S."/>
            <person name="Nakazaki N."/>
            <person name="Naruo K."/>
            <person name="Okumura S."/>
            <person name="Shinpo S."/>
            <person name="Takeuchi C."/>
            <person name="Wada T."/>
            <person name="Watanabe A."/>
            <person name="Yamada M."/>
            <person name="Yasuda M."/>
            <person name="Sato S."/>
            <person name="de la Bastide M."/>
            <person name="Huang E."/>
            <person name="Spiegel L."/>
            <person name="Gnoj L."/>
            <person name="O'Shaughnessy A."/>
            <person name="Preston R."/>
            <person name="Habermann K."/>
            <person name="Murray J."/>
            <person name="Johnson D."/>
            <person name="Rohlfing T."/>
            <person name="Nelson J."/>
            <person name="Stoneking T."/>
            <person name="Pepin K."/>
            <person name="Spieth J."/>
            <person name="Sekhon M."/>
            <person name="Armstrong J."/>
            <person name="Becker M."/>
            <person name="Belter E."/>
            <person name="Cordum H."/>
            <person name="Cordes M."/>
            <person name="Courtney L."/>
            <person name="Courtney W."/>
            <person name="Dante M."/>
            <person name="Du H."/>
            <person name="Edwards J."/>
            <person name="Fryman J."/>
            <person name="Haakensen B."/>
            <person name="Lamar E."/>
            <person name="Latreille P."/>
            <person name="Leonard S."/>
            <person name="Meyer R."/>
            <person name="Mulvaney E."/>
            <person name="Ozersky P."/>
            <person name="Riley A."/>
            <person name="Strowmatt C."/>
            <person name="Wagner-McPherson C."/>
            <person name="Wollam A."/>
            <person name="Yoakum M."/>
            <person name="Bell M."/>
            <person name="Dedhia N."/>
            <person name="Parnell L."/>
            <person name="Shah R."/>
            <person name="Rodriguez M."/>
            <person name="Hoon See L."/>
            <person name="Vil D."/>
            <person name="Baker J."/>
            <person name="Kirchoff K."/>
            <person name="Toth K."/>
            <person name="King L."/>
            <person name="Bahret A."/>
            <person name="Miller B."/>
            <person name="Marra M.A."/>
            <person name="Martienssen R."/>
            <person name="McCombie W.R."/>
            <person name="Wilson R.K."/>
            <person name="Murphy G."/>
            <person name="Bancroft I."/>
            <person name="Volckaert G."/>
            <person name="Wambutt R."/>
            <person name="Duesterhoeft A."/>
            <person name="Stiekema W."/>
            <person name="Pohl T."/>
            <person name="Entian K.-D."/>
            <person name="Terryn N."/>
            <person name="Hartley N."/>
            <person name="Bent E."/>
            <person name="Johnson S."/>
            <person name="Langham S.-A."/>
            <person name="McCullagh B."/>
            <person name="Robben J."/>
            <person name="Grymonprez B."/>
            <person name="Zimmermann W."/>
            <person name="Ramsperger U."/>
            <person name="Wedler H."/>
            <person name="Balke K."/>
            <person name="Wedler E."/>
            <person name="Peters S."/>
            <person name="van Staveren M."/>
            <person name="Dirkse W."/>
            <person name="Mooijman P."/>
            <person name="Klein Lankhorst R."/>
            <person name="Weitzenegger T."/>
            <person name="Bothe G."/>
            <person name="Rose M."/>
            <person name="Hauf J."/>
            <person name="Berneiser S."/>
            <person name="Hempel S."/>
            <person name="Feldpausch M."/>
            <person name="Lamberth S."/>
            <person name="Villarroel R."/>
            <person name="Gielen J."/>
            <person name="Ardiles W."/>
            <person name="Bents O."/>
            <person name="Lemcke K."/>
            <person name="Kolesov G."/>
            <person name="Mayer K.F.X."/>
            <person name="Rudd S."/>
            <person name="Schoof H."/>
            <person name="Schueller C."/>
            <person name="Zaccaria P."/>
            <person name="Mewes H.-W."/>
            <person name="Bevan M."/>
            <person name="Fransz P.F."/>
        </authorList>
    </citation>
    <scope>NUCLEOTIDE SEQUENCE [LARGE SCALE GENOMIC DNA]</scope>
    <source>
        <strain>cv. Columbia</strain>
    </source>
</reference>
<reference key="2">
    <citation type="journal article" date="2017" name="Plant J.">
        <title>Araport11: a complete reannotation of the Arabidopsis thaliana reference genome.</title>
        <authorList>
            <person name="Cheng C.Y."/>
            <person name="Krishnakumar V."/>
            <person name="Chan A.P."/>
            <person name="Thibaud-Nissen F."/>
            <person name="Schobel S."/>
            <person name="Town C.D."/>
        </authorList>
    </citation>
    <scope>GENOME REANNOTATION</scope>
    <source>
        <strain>cv. Columbia</strain>
    </source>
</reference>
<reference key="3">
    <citation type="journal article" date="2008" name="Plant Cell">
        <title>IMPa-4, an Arabidopsis importin alpha isoform, is preferentially involved in agrobacterium-mediated plant transformation.</title>
        <authorList>
            <person name="Bhattacharjee S."/>
            <person name="Lee L.Y."/>
            <person name="Oltmanns H."/>
            <person name="Cao H."/>
            <person name="Gupta V."/>
            <person name="Cuperus J."/>
            <person name="Gelvin S.B."/>
        </authorList>
    </citation>
    <scope>FUNCTION</scope>
    <scope>GENE FAMILY</scope>
</reference>
<accession>F4KF65</accession>
<accession>Q9LYX8</accession>